<keyword id="KW-0030">Aminoacyl-tRNA synthetase</keyword>
<keyword id="KW-0067">ATP-binding</keyword>
<keyword id="KW-0963">Cytoplasm</keyword>
<keyword id="KW-0436">Ligase</keyword>
<keyword id="KW-0547">Nucleotide-binding</keyword>
<keyword id="KW-0648">Protein biosynthesis</keyword>
<organism>
    <name type="scientific">Bartonella bacilliformis (strain ATCC 35685 / KC583 / Herrer 020/F12,63)</name>
    <dbReference type="NCBI Taxonomy" id="360095"/>
    <lineage>
        <taxon>Bacteria</taxon>
        <taxon>Pseudomonadati</taxon>
        <taxon>Pseudomonadota</taxon>
        <taxon>Alphaproteobacteria</taxon>
        <taxon>Hyphomicrobiales</taxon>
        <taxon>Bartonellaceae</taxon>
        <taxon>Bartonella</taxon>
    </lineage>
</organism>
<dbReference type="EC" id="6.1.1.17" evidence="1"/>
<dbReference type="EMBL" id="CP000524">
    <property type="protein sequence ID" value="ABM44719.1"/>
    <property type="molecule type" value="Genomic_DNA"/>
</dbReference>
<dbReference type="SMR" id="A1USF5"/>
<dbReference type="STRING" id="360095.BARBAKC583_0600"/>
<dbReference type="GeneID" id="4684979"/>
<dbReference type="KEGG" id="bbk:BARBAKC583_0600"/>
<dbReference type="PATRIC" id="fig|360095.6.peg.586"/>
<dbReference type="eggNOG" id="COG0008">
    <property type="taxonomic scope" value="Bacteria"/>
</dbReference>
<dbReference type="HOGENOM" id="CLU_015768_6_0_5"/>
<dbReference type="OrthoDB" id="9807503at2"/>
<dbReference type="Proteomes" id="UP000000643">
    <property type="component" value="Chromosome"/>
</dbReference>
<dbReference type="GO" id="GO:0005829">
    <property type="term" value="C:cytosol"/>
    <property type="evidence" value="ECO:0007669"/>
    <property type="project" value="TreeGrafter"/>
</dbReference>
<dbReference type="GO" id="GO:0005524">
    <property type="term" value="F:ATP binding"/>
    <property type="evidence" value="ECO:0007669"/>
    <property type="project" value="UniProtKB-UniRule"/>
</dbReference>
<dbReference type="GO" id="GO:0004818">
    <property type="term" value="F:glutamate-tRNA ligase activity"/>
    <property type="evidence" value="ECO:0007669"/>
    <property type="project" value="UniProtKB-UniRule"/>
</dbReference>
<dbReference type="GO" id="GO:0000049">
    <property type="term" value="F:tRNA binding"/>
    <property type="evidence" value="ECO:0007669"/>
    <property type="project" value="InterPro"/>
</dbReference>
<dbReference type="GO" id="GO:0008270">
    <property type="term" value="F:zinc ion binding"/>
    <property type="evidence" value="ECO:0007669"/>
    <property type="project" value="InterPro"/>
</dbReference>
<dbReference type="GO" id="GO:0006424">
    <property type="term" value="P:glutamyl-tRNA aminoacylation"/>
    <property type="evidence" value="ECO:0007669"/>
    <property type="project" value="UniProtKB-UniRule"/>
</dbReference>
<dbReference type="CDD" id="cd00808">
    <property type="entry name" value="GluRS_core"/>
    <property type="match status" value="1"/>
</dbReference>
<dbReference type="FunFam" id="3.40.50.620:FF:000007">
    <property type="entry name" value="Glutamate--tRNA ligase"/>
    <property type="match status" value="1"/>
</dbReference>
<dbReference type="Gene3D" id="1.10.10.350">
    <property type="match status" value="1"/>
</dbReference>
<dbReference type="Gene3D" id="3.40.50.620">
    <property type="entry name" value="HUPs"/>
    <property type="match status" value="1"/>
</dbReference>
<dbReference type="HAMAP" id="MF_00022">
    <property type="entry name" value="Glu_tRNA_synth_type1"/>
    <property type="match status" value="1"/>
</dbReference>
<dbReference type="InterPro" id="IPR045462">
    <property type="entry name" value="aa-tRNA-synth_I_cd-bd"/>
</dbReference>
<dbReference type="InterPro" id="IPR020751">
    <property type="entry name" value="aa-tRNA-synth_I_codon-bd_sub2"/>
</dbReference>
<dbReference type="InterPro" id="IPR001412">
    <property type="entry name" value="aa-tRNA-synth_I_CS"/>
</dbReference>
<dbReference type="InterPro" id="IPR008925">
    <property type="entry name" value="aa_tRNA-synth_I_cd-bd_sf"/>
</dbReference>
<dbReference type="InterPro" id="IPR004527">
    <property type="entry name" value="Glu-tRNA-ligase_bac/mito"/>
</dbReference>
<dbReference type="InterPro" id="IPR000924">
    <property type="entry name" value="Glu/Gln-tRNA-synth"/>
</dbReference>
<dbReference type="InterPro" id="IPR020058">
    <property type="entry name" value="Glu/Gln-tRNA-synth_Ib_cat-dom"/>
</dbReference>
<dbReference type="InterPro" id="IPR049940">
    <property type="entry name" value="GluQ/Sye"/>
</dbReference>
<dbReference type="InterPro" id="IPR033910">
    <property type="entry name" value="GluRS_core"/>
</dbReference>
<dbReference type="InterPro" id="IPR014729">
    <property type="entry name" value="Rossmann-like_a/b/a_fold"/>
</dbReference>
<dbReference type="NCBIfam" id="TIGR00464">
    <property type="entry name" value="gltX_bact"/>
    <property type="match status" value="1"/>
</dbReference>
<dbReference type="PANTHER" id="PTHR43311">
    <property type="entry name" value="GLUTAMATE--TRNA LIGASE"/>
    <property type="match status" value="1"/>
</dbReference>
<dbReference type="PANTHER" id="PTHR43311:SF2">
    <property type="entry name" value="GLUTAMATE--TRNA LIGASE, MITOCHONDRIAL-RELATED"/>
    <property type="match status" value="1"/>
</dbReference>
<dbReference type="Pfam" id="PF19269">
    <property type="entry name" value="Anticodon_2"/>
    <property type="match status" value="1"/>
</dbReference>
<dbReference type="Pfam" id="PF00749">
    <property type="entry name" value="tRNA-synt_1c"/>
    <property type="match status" value="1"/>
</dbReference>
<dbReference type="PRINTS" id="PR00987">
    <property type="entry name" value="TRNASYNTHGLU"/>
</dbReference>
<dbReference type="SUPFAM" id="SSF48163">
    <property type="entry name" value="An anticodon-binding domain of class I aminoacyl-tRNA synthetases"/>
    <property type="match status" value="1"/>
</dbReference>
<dbReference type="SUPFAM" id="SSF52374">
    <property type="entry name" value="Nucleotidylyl transferase"/>
    <property type="match status" value="1"/>
</dbReference>
<dbReference type="PROSITE" id="PS00178">
    <property type="entry name" value="AA_TRNA_LIGASE_I"/>
    <property type="match status" value="1"/>
</dbReference>
<accession>A1USF5</accession>
<protein>
    <recommendedName>
        <fullName evidence="1">Glutamate--tRNA ligase 1</fullName>
        <ecNumber evidence="1">6.1.1.17</ecNumber>
    </recommendedName>
    <alternativeName>
        <fullName evidence="1">Glutamyl-tRNA synthetase 1</fullName>
        <shortName evidence="1">GluRS 1</shortName>
    </alternativeName>
</protein>
<evidence type="ECO:0000255" key="1">
    <source>
        <dbReference type="HAMAP-Rule" id="MF_00022"/>
    </source>
</evidence>
<name>SYE1_BARBK</name>
<reference key="1">
    <citation type="submission" date="2006-12" db="EMBL/GenBank/DDBJ databases">
        <authorList>
            <person name="Hendrix L."/>
            <person name="Mohamoud Y."/>
            <person name="Radune D."/>
            <person name="Shvartsbeyn A."/>
            <person name="Daugherty S."/>
            <person name="Dodson R."/>
            <person name="Durkin A.S."/>
            <person name="Harkins D."/>
            <person name="Huot H."/>
            <person name="Kothari S.P."/>
            <person name="Madupu R."/>
            <person name="Li J."/>
            <person name="Nelson W.C."/>
            <person name="Shrivastava S."/>
            <person name="Giglio M.G."/>
            <person name="Haft D."/>
            <person name="Selengut J."/>
            <person name="Fraser-Ligget C."/>
            <person name="Seshadri R."/>
        </authorList>
    </citation>
    <scope>NUCLEOTIDE SEQUENCE [LARGE SCALE GENOMIC DNA]</scope>
    <source>
        <strain>ATCC 35685 / KC583 / Herrer 020/F12,63</strain>
    </source>
</reference>
<comment type="function">
    <text evidence="1">Catalyzes the attachment of glutamate to tRNA(Glu) in a two-step reaction: glutamate is first activated by ATP to form Glu-AMP and then transferred to the acceptor end of tRNA(Glu).</text>
</comment>
<comment type="catalytic activity">
    <reaction evidence="1">
        <text>tRNA(Glu) + L-glutamate + ATP = L-glutamyl-tRNA(Glu) + AMP + diphosphate</text>
        <dbReference type="Rhea" id="RHEA:23540"/>
        <dbReference type="Rhea" id="RHEA-COMP:9663"/>
        <dbReference type="Rhea" id="RHEA-COMP:9680"/>
        <dbReference type="ChEBI" id="CHEBI:29985"/>
        <dbReference type="ChEBI" id="CHEBI:30616"/>
        <dbReference type="ChEBI" id="CHEBI:33019"/>
        <dbReference type="ChEBI" id="CHEBI:78442"/>
        <dbReference type="ChEBI" id="CHEBI:78520"/>
        <dbReference type="ChEBI" id="CHEBI:456215"/>
        <dbReference type="EC" id="6.1.1.17"/>
    </reaction>
</comment>
<comment type="subunit">
    <text evidence="1">Monomer.</text>
</comment>
<comment type="subcellular location">
    <subcellularLocation>
        <location evidence="1">Cytoplasm</location>
    </subcellularLocation>
</comment>
<comment type="similarity">
    <text evidence="1">Belongs to the class-I aminoacyl-tRNA synthetase family. Glutamate--tRNA ligase type 1 subfamily.</text>
</comment>
<gene>
    <name evidence="1" type="primary">gltX1</name>
    <name type="ordered locus">BARBAKC583_0600</name>
</gene>
<feature type="chain" id="PRO_1000001873" description="Glutamate--tRNA ligase 1">
    <location>
        <begin position="1"/>
        <end position="476"/>
    </location>
</feature>
<feature type="short sequence motif" description="'HIGH' region" evidence="1">
    <location>
        <begin position="9"/>
        <end position="19"/>
    </location>
</feature>
<feature type="short sequence motif" description="'KMSKS' region" evidence="1">
    <location>
        <begin position="238"/>
        <end position="242"/>
    </location>
</feature>
<feature type="binding site" evidence="1">
    <location>
        <position position="241"/>
    </location>
    <ligand>
        <name>ATP</name>
        <dbReference type="ChEBI" id="CHEBI:30616"/>
    </ligand>
</feature>
<proteinExistence type="inferred from homology"/>
<sequence length="476" mass="53541">MSVITRFAPSPTGFLHIGGARTALFNWLYAKHHGGKMLLRIEDTDRERSTDAAVKAIINGLHWIGLSYDGDPISQFERTERHREVAEQLVKDGKAYYCYASPEELAEMRESARAEGRPPHYDGHWRDRDISEAPKGIKPVIRIKAPKEGATIVRDRVQGDVLFPNKDLDDFIILRSDGTPTYMLAVVVDDHDMGITHIIRGDDHLTNAARQTIIFNAMGWKIPVMAHIPLIHGEDGAKLSKRHGALGVDAYRAMGYLPAALRNYLVRLGWSHGNDEIISTEDMISWFDIDDINKGAARLDFKKLNAINGHYIRMSTDQDLFDSTLSILPEIESGLEIIDKLDKKHRAQFLAAIPHIKERSKTLLELIDGASFIFTKQPLLLDEKAKMLLNEDGQAILKSIYPILESCSYWDTNTLDEALRHYAQKQELKFGTIAQPLRAALTGRATSPGVFDVLVLLGRNESLNRINQQINTTKCS</sequence>